<gene>
    <name evidence="8" type="primary">RBPMS2</name>
</gene>
<organism>
    <name type="scientific">Gallus gallus</name>
    <name type="common">Chicken</name>
    <dbReference type="NCBI Taxonomy" id="9031"/>
    <lineage>
        <taxon>Eukaryota</taxon>
        <taxon>Metazoa</taxon>
        <taxon>Chordata</taxon>
        <taxon>Craniata</taxon>
        <taxon>Vertebrata</taxon>
        <taxon>Euteleostomi</taxon>
        <taxon>Archelosauria</taxon>
        <taxon>Archosauria</taxon>
        <taxon>Dinosauria</taxon>
        <taxon>Saurischia</taxon>
        <taxon>Theropoda</taxon>
        <taxon>Coelurosauria</taxon>
        <taxon>Aves</taxon>
        <taxon>Neognathae</taxon>
        <taxon>Galloanserae</taxon>
        <taxon>Galliformes</taxon>
        <taxon>Phasianidae</taxon>
        <taxon>Phasianinae</taxon>
        <taxon>Gallus</taxon>
    </lineage>
</organism>
<accession>Q9W6I1</accession>
<sequence>MSNLNKDTEHTNGGGNVEEEVRTLFVSGLPVDIKPRELYLLFRPFKGYEGSLIKLTSKQPVGFVTFDSRAGAEAAKNALNGIRFDPENPQTLRLEFAKANTKMAKSKLMATPNPTNIHPALGAHFIARDPYDLTGAALIPASPEAWAPYPLYTTELTPAIPHAAFTYPAAAAAAAALHAQMRWYPPSEATQQGWKSRQFC</sequence>
<feature type="chain" id="PRO_0000081795" description="RNA-binding protein with multiple splicing 2">
    <location>
        <begin position="1"/>
        <end position="200"/>
    </location>
</feature>
<feature type="domain" description="RRM" evidence="3">
    <location>
        <begin position="22"/>
        <end position="99"/>
    </location>
</feature>
<feature type="region of interest" description="Important for homodimerization" evidence="2">
    <location>
        <begin position="32"/>
        <end position="42"/>
    </location>
</feature>
<feature type="mutagenesis site" description="Abolishes homodimerization and up-regulation of NOG mRNA levels. Loss of function in gastrointestinal smooth muscle cell differentiation and in gastrointestinal smooth muscle development." evidence="6">
    <original>L</original>
    <variation>A</variation>
    <location>
        <position position="40"/>
    </location>
</feature>
<dbReference type="EMBL" id="AF129933">
    <property type="protein sequence ID" value="AAD30273.1"/>
    <property type="molecule type" value="mRNA"/>
</dbReference>
<dbReference type="RefSeq" id="NP_990200.1">
    <property type="nucleotide sequence ID" value="NM_204869.2"/>
</dbReference>
<dbReference type="SMR" id="Q9W6I1"/>
<dbReference type="FunCoup" id="Q9W6I1">
    <property type="interactions" value="123"/>
</dbReference>
<dbReference type="STRING" id="9031.ENSGALP00000039532"/>
<dbReference type="PaxDb" id="9031-ENSGALP00000039532"/>
<dbReference type="GeneID" id="395678"/>
<dbReference type="KEGG" id="gga:395678"/>
<dbReference type="CTD" id="348093"/>
<dbReference type="VEuPathDB" id="HostDB:geneid_395678"/>
<dbReference type="eggNOG" id="KOG1457">
    <property type="taxonomic scope" value="Eukaryota"/>
</dbReference>
<dbReference type="HOGENOM" id="CLU_099973_1_1_1"/>
<dbReference type="InParanoid" id="Q9W6I1"/>
<dbReference type="OMA" id="AQQGWKY"/>
<dbReference type="OrthoDB" id="431169at2759"/>
<dbReference type="PhylomeDB" id="Q9W6I1"/>
<dbReference type="PRO" id="PR:Q9W6I1"/>
<dbReference type="Proteomes" id="UP000000539">
    <property type="component" value="Chromosome 10"/>
</dbReference>
<dbReference type="Bgee" id="ENSGALG00000030988">
    <property type="expression patterns" value="Expressed in heart and 11 other cell types or tissues"/>
</dbReference>
<dbReference type="GO" id="GO:0005737">
    <property type="term" value="C:cytoplasm"/>
    <property type="evidence" value="ECO:0000250"/>
    <property type="project" value="UniProtKB"/>
</dbReference>
<dbReference type="GO" id="GO:0010494">
    <property type="term" value="C:cytoplasmic stress granule"/>
    <property type="evidence" value="ECO:0000250"/>
    <property type="project" value="UniProtKB"/>
</dbReference>
<dbReference type="GO" id="GO:0005829">
    <property type="term" value="C:cytosol"/>
    <property type="evidence" value="ECO:0000250"/>
    <property type="project" value="UniProtKB"/>
</dbReference>
<dbReference type="GO" id="GO:0005634">
    <property type="term" value="C:nucleus"/>
    <property type="evidence" value="ECO:0000250"/>
    <property type="project" value="UniProtKB"/>
</dbReference>
<dbReference type="GO" id="GO:0003729">
    <property type="term" value="F:mRNA binding"/>
    <property type="evidence" value="ECO:0000314"/>
    <property type="project" value="UniProtKB"/>
</dbReference>
<dbReference type="GO" id="GO:0042803">
    <property type="term" value="F:protein homodimerization activity"/>
    <property type="evidence" value="ECO:0000353"/>
    <property type="project" value="UniProtKB"/>
</dbReference>
<dbReference type="GO" id="GO:0003713">
    <property type="term" value="F:transcription coactivator activity"/>
    <property type="evidence" value="ECO:0000250"/>
    <property type="project" value="UniProtKB"/>
</dbReference>
<dbReference type="GO" id="GO:0048565">
    <property type="term" value="P:digestive tract development"/>
    <property type="evidence" value="ECO:0000315"/>
    <property type="project" value="UniProtKB"/>
</dbReference>
<dbReference type="GO" id="GO:0048557">
    <property type="term" value="P:embryonic digestive tract morphogenesis"/>
    <property type="evidence" value="ECO:0000315"/>
    <property type="project" value="UniProtKB"/>
</dbReference>
<dbReference type="GO" id="GO:0030514">
    <property type="term" value="P:negative regulation of BMP signaling pathway"/>
    <property type="evidence" value="ECO:0000315"/>
    <property type="project" value="UniProtKB"/>
</dbReference>
<dbReference type="GO" id="GO:0051151">
    <property type="term" value="P:negative regulation of smooth muscle cell differentiation"/>
    <property type="evidence" value="ECO:0000315"/>
    <property type="project" value="UniProtKB"/>
</dbReference>
<dbReference type="GO" id="GO:0048661">
    <property type="term" value="P:positive regulation of smooth muscle cell proliferation"/>
    <property type="evidence" value="ECO:0000315"/>
    <property type="project" value="UniProtKB"/>
</dbReference>
<dbReference type="GO" id="GO:0000381">
    <property type="term" value="P:regulation of alternative mRNA splicing, via spliceosome"/>
    <property type="evidence" value="ECO:0000250"/>
    <property type="project" value="UniProtKB"/>
</dbReference>
<dbReference type="GO" id="GO:0060395">
    <property type="term" value="P:SMAD protein signal transduction"/>
    <property type="evidence" value="ECO:0000250"/>
    <property type="project" value="UniProtKB"/>
</dbReference>
<dbReference type="CDD" id="cd12683">
    <property type="entry name" value="RRM_RBPMS2"/>
    <property type="match status" value="1"/>
</dbReference>
<dbReference type="FunFam" id="3.30.70.330:FF:000037">
    <property type="entry name" value="RNA-binding protein with multiple splicing 2"/>
    <property type="match status" value="1"/>
</dbReference>
<dbReference type="Gene3D" id="3.30.70.330">
    <property type="match status" value="1"/>
</dbReference>
<dbReference type="InterPro" id="IPR012677">
    <property type="entry name" value="Nucleotide-bd_a/b_plait_sf"/>
</dbReference>
<dbReference type="InterPro" id="IPR035979">
    <property type="entry name" value="RBD_domain_sf"/>
</dbReference>
<dbReference type="InterPro" id="IPR034787">
    <property type="entry name" value="RBPMS2_RRM"/>
</dbReference>
<dbReference type="InterPro" id="IPR000504">
    <property type="entry name" value="RRM_dom"/>
</dbReference>
<dbReference type="PANTHER" id="PTHR10501">
    <property type="entry name" value="U1 SMALL NUCLEAR RIBONUCLEOPROTEIN A/U2 SMALL NUCLEAR RIBONUCLEOPROTEIN B"/>
    <property type="match status" value="1"/>
</dbReference>
<dbReference type="Pfam" id="PF00076">
    <property type="entry name" value="RRM_1"/>
    <property type="match status" value="1"/>
</dbReference>
<dbReference type="SMART" id="SM00360">
    <property type="entry name" value="RRM"/>
    <property type="match status" value="1"/>
</dbReference>
<dbReference type="SUPFAM" id="SSF54928">
    <property type="entry name" value="RNA-binding domain, RBD"/>
    <property type="match status" value="1"/>
</dbReference>
<dbReference type="PROSITE" id="PS50102">
    <property type="entry name" value="RRM"/>
    <property type="match status" value="1"/>
</dbReference>
<protein>
    <recommendedName>
        <fullName evidence="2">RNA-binding protein with multiple splicing 2</fullName>
    </recommendedName>
    <alternativeName>
        <fullName evidence="7">Heart and RRM expressed sequence</fullName>
        <shortName evidence="7">Hermes</shortName>
    </alternativeName>
</protein>
<proteinExistence type="evidence at protein level"/>
<comment type="function">
    <text evidence="1 2 5 6">RNA-binding protein involved in the regulation of smooth muscle cell differentiation and proliferation in the gastrointestinal system (PubMed:22683258, PubMed:25064856). Binds NOG mRNA, the major inhibitor of the bone morphogenetic protein (BMP) pathway (PubMed:25064856). Mediates an increase of NOG mRNA levels, thereby contributing to the negative regulation of BMP signaling pathway and promoting reversible dedifferentiation and proliferation of smooth muscle cells (PubMed:25064856). Acts as a pre-mRNA alternative splicing regulator. Mediates ACTN1 and FLNB alternative splicing (By similarity). Likely binds to mRNA tandem CAC trinucleotide or CA dinucleotide motifs (By similarity).</text>
</comment>
<comment type="subunit">
    <text evidence="6">Homodimer.</text>
</comment>
<comment type="subcellular location">
    <subcellularLocation>
        <location evidence="2">Cytoplasm</location>
    </subcellularLocation>
    <subcellularLocation>
        <location evidence="2">Nucleus</location>
    </subcellularLocation>
    <subcellularLocation>
        <location evidence="2">Cytoplasm</location>
        <location evidence="2">Stress granule</location>
    </subcellularLocation>
</comment>
<comment type="tissue specificity">
    <text evidence="4">Expressed in developing heart.</text>
</comment>
<comment type="developmental stage">
    <text evidence="4 5">Highly expressed in embryonic stomach, midgut and colon during the period of visceral smooth muscle cell differentiation; levels decrease rapidly thereafter (PubMed:22683258). mRNA already detected at stage 7-8 in the cardiogenic mesoderm, and become almost undetectable in the outer curvature of the ventricular region whereas remaining high in the developing atrial regions (PubMed:10096065).</text>
</comment>
<comment type="domain">
    <text evidence="2">The RNA recognition motif (RRM) domain mediates binding to tandem CAC trinucleotide motif separated by a variable spacer region present on single-stranded RNA. Can also bind to CA dinucleotide repeats.</text>
</comment>
<evidence type="ECO:0000250" key="1">
    <source>
        <dbReference type="UniProtKB" id="B5DFF2"/>
    </source>
</evidence>
<evidence type="ECO:0000250" key="2">
    <source>
        <dbReference type="UniProtKB" id="Q6ZRY4"/>
    </source>
</evidence>
<evidence type="ECO:0000255" key="3">
    <source>
        <dbReference type="PROSITE-ProRule" id="PRU00176"/>
    </source>
</evidence>
<evidence type="ECO:0000269" key="4">
    <source>
    </source>
</evidence>
<evidence type="ECO:0000269" key="5">
    <source>
    </source>
</evidence>
<evidence type="ECO:0000269" key="6">
    <source>
    </source>
</evidence>
<evidence type="ECO:0000303" key="7">
    <source>
    </source>
</evidence>
<evidence type="ECO:0000305" key="8"/>
<name>RBPS2_CHICK</name>
<keyword id="KW-0963">Cytoplasm</keyword>
<keyword id="KW-0217">Developmental protein</keyword>
<keyword id="KW-0539">Nucleus</keyword>
<keyword id="KW-1185">Reference proteome</keyword>
<keyword id="KW-0694">RNA-binding</keyword>
<reference key="1">
    <citation type="journal article" date="1999" name="Mech. Dev.">
        <title>The RNA-binding protein gene, hermes, is expressed at high levels in the developing heart.</title>
        <authorList>
            <person name="Gerber W.V."/>
            <person name="Yatskievych T.A."/>
            <person name="Antin P.B."/>
            <person name="Correia K.M."/>
            <person name="Conlon R.A."/>
            <person name="Krieg P.A."/>
        </authorList>
    </citation>
    <scope>NUCLEOTIDE SEQUENCE [MRNA]</scope>
    <scope>TISSUE SPECIFICITY</scope>
    <scope>DEVELOPMENTAL STAGE</scope>
    <source>
        <tissue>Heart</tissue>
    </source>
</reference>
<reference key="2">
    <citation type="journal article" date="2012" name="Gastroenterology">
        <title>The RNA-binding protein RBPMS2 regulates development of gastrointestinal smooth muscle.</title>
        <authorList>
            <person name="Notarnicola C."/>
            <person name="Rouleau C."/>
            <person name="Le Guen L."/>
            <person name="Virsolvy A."/>
            <person name="Richard S."/>
            <person name="Faure S."/>
            <person name="De Santa Barbara P."/>
        </authorList>
    </citation>
    <scope>FUNCTION</scope>
    <scope>DEVELOPMENTAL STAGE</scope>
</reference>
<reference key="3">
    <citation type="journal article" date="2014" name="Nucleic Acids Res.">
        <title>Homodimerization of RBPMS2 through a new RRM-interaction motif is necessary to control smooth muscle plasticity.</title>
        <authorList>
            <person name="Sagnol S."/>
            <person name="Yang Y."/>
            <person name="Bessin Y."/>
            <person name="Allemand F."/>
            <person name="Hapkova I."/>
            <person name="Notarnicola C."/>
            <person name="Guichou J.F."/>
            <person name="Faure S."/>
            <person name="Labesse G."/>
            <person name="de Santa Barbara P."/>
        </authorList>
    </citation>
    <scope>FUNCTION</scope>
    <scope>SUBCELLULAR LOCATION</scope>
    <scope>SUBUNIT</scope>
    <scope>RNA-BINDING</scope>
    <scope>MUTAGENESIS OF LEU-40</scope>
</reference>